<protein>
    <recommendedName>
        <fullName evidence="1">Single-stranded DNA-binding protein</fullName>
        <shortName evidence="1">SSB protein</shortName>
    </recommendedName>
    <alternativeName>
        <fullName evidence="1">Gp32</fullName>
    </alternativeName>
    <alternativeName>
        <fullName evidence="1">Helix-destabilizing protein</fullName>
    </alternativeName>
</protein>
<sequence>MFKRKSTAELAAQMAKLNGNKGFSSEDKGEWKLKLDNAGNGQAVIRFLPSKNDEQAPFAILVNHGFKKNGKWYIETCSSTHGDYDSCPVCQYISKNDLYNTDNKEYSLVKRKTSYWANILVVKDPAAPENEGKVFKYRFGKKIWDKINAMIAVDVEMGETPVDVTCPWEGANFVLKVKQVSGFSNYDESKFLNQSAIPNIDDESFQKELFEQMVDLSEMTSKDKFKSFEELNTKFGQVMGTAVMGGAAATAAKKADKVADDLDAFNVDDFNTKTEDDFMSSSSGSSSSADDTDLDDLLNDL</sequence>
<proteinExistence type="evidence at protein level"/>
<name>SSB_BPT4</name>
<keyword id="KW-0002">3D-structure</keyword>
<keyword id="KW-0903">Direct protein sequencing</keyword>
<keyword id="KW-0227">DNA damage</keyword>
<keyword id="KW-0234">DNA repair</keyword>
<keyword id="KW-0235">DNA replication</keyword>
<keyword id="KW-0238">DNA-binding</keyword>
<keyword id="KW-0479">Metal-binding</keyword>
<keyword id="KW-1185">Reference proteome</keyword>
<keyword id="KW-0678">Repressor</keyword>
<keyword id="KW-1194">Viral DNA replication</keyword>
<keyword id="KW-0862">Zinc</keyword>
<comment type="function">
    <text evidence="1 3 4 5 7 17 20">Single-stranded DNA-binding protein that participates in viral DNA replication, recombination, and repair (Probable). Coats the lagging-strand ssDNA as the replication fork advances (PubMed:9079662). Stimulates the activities of viral DNA polymerase and DnaB-like SF4 replicative helicase, probably via its interaction with the helicase assembly factor (PubMed:14871889). Stimulates the unwinding activity of UvsW helicase, inhibits it DNA winding activity (PubMed:17092935). Together with DnaB-like SF4 replicative helicase and the helicase assembly factor, promotes pairing of two homologous DNA molecules containing complementary single-stranded regions and mediates homologous DNA strand exchange (PubMed:11459967). Also promotes the formation of joint molecules (PubMed:9079662). mRNA specific autogenous translational repressor (PubMed:15507125).</text>
</comment>
<comment type="subunit">
    <text evidence="1 5 6 10 11 12 13 18">Homodimer in the absence of DNA, monomer when binding DNA (PubMed:26275775). Interacts with the DNA helicase assembly protein; a ternary complex between the helicase assembly protein, the single-stranded DNA-binding protein and ssDNA is an obligatory intermediate in the helicase loading mechanism (PubMed:15507125, PubMed:24338568). Part of the replicase complex that includes the DNA polymerase, the polymerase clamp, the clamp loader complex, the single-stranded DNA binding protein, the primase, the DnaB-like SF4 replicative helicase and the helicase assembly factor (PubMed:16800624, PubMed:26102578). Interacts (via C-terminus) with the viral SF1 dDA helicase (PubMed:25481875). Interacts with the viral SF2 UvsW repair helicase (PubMed:23732982).</text>
</comment>
<comment type="domain">
    <text evidence="1 9 14">The acidic C-terminus is involved in modulating the ssDNA binding properties (PubMed:29634784). The N-terminus LAST motif is involved in the cooperative binding of the protein to ssDNA (PubMed:1736285).</text>
</comment>
<comment type="similarity">
    <text evidence="1">Belongs to the Tequatrovirus single-stranded DNA-binding protein family.</text>
</comment>
<organismHost>
    <name type="scientific">Escherichia coli</name>
    <dbReference type="NCBI Taxonomy" id="562"/>
</organismHost>
<reference key="1">
    <citation type="journal article" date="1982" name="Proc. Natl. Acad. Sci. U.S.A.">
        <title>Nucleotide sequences involved in bacteriophage T4 gene 32 translational self-regulation.</title>
        <authorList>
            <person name="Krisch H.M."/>
            <person name="Allet B."/>
        </authorList>
    </citation>
    <scope>NUCLEOTIDE SEQUENCE [GENOMIC DNA] (AMBER MUTANT 32AMA453)</scope>
</reference>
<reference key="2">
    <citation type="journal article" date="1981" name="J. Biol. Chem.">
        <title>Primary structure of the bacteriophage T4 DNA helix-destabilizing protein.</title>
        <authorList>
            <person name="Williams K.R."/>
            <person name="Lopresti M.B."/>
            <person name="Setoguchi M."/>
        </authorList>
    </citation>
    <scope>PROTEIN SEQUENCE</scope>
</reference>
<reference key="3">
    <citation type="journal article" date="2003" name="Microbiol. Mol. Biol. Rev.">
        <title>Bacteriophage T4 genome.</title>
        <authorList>
            <person name="Miller E.S."/>
            <person name="Kutter E."/>
            <person name="Mosig G."/>
            <person name="Arisaka F."/>
            <person name="Kunisawa T."/>
            <person name="Ruger W."/>
        </authorList>
    </citation>
    <scope>NUCLEOTIDE SEQUENCE [LARGE SCALE GENOMIC DNA]</scope>
</reference>
<reference key="4">
    <citation type="journal article" date="1980" name="Hoppe-Seyler's Z. Physiol. Chem.">
        <title>Amino acid sequence studies on T4 gene 32 DNA-binding proteins.</title>
        <authorList>
            <person name="Pan Y.-C.E."/>
            <person name="Nakashima Y."/>
            <person name="Sharief F.S."/>
            <person name="Li S.S.-L."/>
        </authorList>
    </citation>
    <scope>PRELIMINARY PROTEIN SEQUENCE OF 1-74 AND 94-282</scope>
</reference>
<reference key="5">
    <citation type="journal article" date="1993" name="J. Mol. Biol.">
        <title>Assembly of the bacteriophage T4 replication machine requires the acidic carboxy terminus of gene 32 protein.</title>
        <authorList>
            <person name="Hurley J.M."/>
            <person name="Chervitz S.A."/>
            <person name="Jarvis T.C."/>
            <person name="Singer B.S."/>
            <person name="Gold L."/>
        </authorList>
    </citation>
    <scope>NUCLEOTIDE SEQUENCE [GENOMIC DNA] OF 213-301 (MUTANT DELTA PR201)</scope>
</reference>
<reference key="6">
    <citation type="journal article" date="1992" name="Biochemistry">
        <title>Zn(II) coordination domain mutants of T4 gene 32 protein.</title>
        <authorList>
            <person name="Giedroc D.P."/>
            <person name="Qiu H."/>
            <person name="Khan R."/>
            <person name="King G.C."/>
            <person name="Chen K."/>
        </authorList>
    </citation>
    <scope>ZINC-BINDING</scope>
</reference>
<reference key="7">
    <citation type="journal article" date="1992" name="Proc. Natl. Acad. Sci. U.S.A.">
        <title>Structural basis for the nucleic acid binding cooperativity of bacteriophage T4 gene 32 protein: the (Lys/Arg)3(Ser/Thr)2 (LAST) motif.</title>
        <authorList>
            <person name="Casas-Finet J.R."/>
            <person name="Fischer K.R."/>
            <person name="Karpel R.L."/>
        </authorList>
    </citation>
    <scope>DOMAIN</scope>
</reference>
<reference key="8">
    <citation type="journal article" date="1994" name="J. Biol. Chem.">
        <title>Purification and characterization of bacteriophage T4 gene 59 protein. A DNA helicase assembly protein involved in DNA replication.</title>
        <authorList>
            <person name="Barry J."/>
            <person name="Alberts B."/>
        </authorList>
    </citation>
    <scope>INTERACTION WITH THE DNA HELICASE ASSEMBLY PROTEIN</scope>
</reference>
<reference key="9">
    <citation type="journal article" date="1997" name="J. Biol. Chem.">
        <title>Role of the bacteriophage T7 and T4 single-stranded DNA-binding proteins in the formation of joint molecules and DNA helicase-catalyzed polar branch migration.</title>
        <authorList>
            <person name="Kong D."/>
            <person name="Nossal N.G."/>
            <person name="Richardson C.C."/>
        </authorList>
    </citation>
    <scope>FUNCTION</scope>
</reference>
<reference key="10">
    <citation type="journal article" date="2001" name="Proc. Natl. Acad. Sci. U.S.A.">
        <title>Mediator proteins orchestrate enzyme-ssDNA assembly during T4 recombination-dependent DNA replication and repair.</title>
        <authorList>
            <person name="Bleuit J.S."/>
            <person name="Xu H."/>
            <person name="Ma Y."/>
            <person name="Wang T."/>
            <person name="Liu J."/>
            <person name="Morrical S.W."/>
        </authorList>
    </citation>
    <scope>REVIEW</scope>
</reference>
<reference key="11">
    <citation type="journal article" date="2004" name="Virol. J.">
        <title>Divergence of the mRNA targets for the Ssb proteins of bacteriophages T4 and RB69.</title>
        <authorList>
            <person name="Borjac-Natour J.M."/>
            <person name="Petrov V.M."/>
            <person name="Karam J.D."/>
        </authorList>
    </citation>
    <scope>FUNCTION</scope>
    <scope>INTERACTION WITH THE DNA HELICASE ASSEMBLY PROTEIN</scope>
</reference>
<reference key="12">
    <citation type="journal article" date="2004" name="J. Biol. Chem.">
        <title>Dual functions of single-stranded DNA-binding protein in helicase loading at the bacteriophage T4 DNA replication fork.</title>
        <authorList>
            <person name="Ma Y."/>
            <person name="Wang T."/>
            <person name="Villemain J.L."/>
            <person name="Giedroc D.P."/>
            <person name="Morrical S.W."/>
        </authorList>
    </citation>
    <scope>FUNCTION</scope>
</reference>
<reference key="13">
    <citation type="journal article" date="2006" name="Biochemistry">
        <title>Single-molecule investigation of the T4 bacteriophage DNA polymerase holoenzyme: multiple pathways of holoenzyme formation.</title>
        <authorList>
            <person name="Smiley R.D."/>
            <person name="Zhuang Z."/>
            <person name="Benkovic S.J."/>
            <person name="Hammes G.G."/>
        </authorList>
    </citation>
    <scope>IDENTIFICATION IN THE REPLICASE COMPLEX</scope>
</reference>
<reference key="14">
    <citation type="journal article" date="2007" name="J. Biol. Chem.">
        <title>The T4 phage UvsW protein contains both DNA unwinding and strand annealing activities.</title>
        <authorList>
            <person name="Nelson S.W."/>
            <person name="Benkovic S.J."/>
        </authorList>
    </citation>
    <scope>ACTIVATES UVSW HELICASE</scope>
</reference>
<reference key="15">
    <citation type="journal article" date="2013" name="J. Mol. Biol.">
        <title>Interaction of T4 UvsW helicase and single-stranded DNA binding protein gp32 through its carboxy-terminal acidic tail.</title>
        <authorList>
            <person name="Perumal S.K."/>
            <person name="Nelson S.W."/>
            <person name="Benkovic S.J."/>
        </authorList>
    </citation>
    <scope>INTERACTION WITH SF2 UVSW HELICASE</scope>
</reference>
<reference key="16">
    <citation type="journal article" date="2014" name="J. Biol. Chem.">
        <title>Control of helicase loading in the coupled DNA replication and recombination systems of bacteriophage T4.</title>
        <authorList>
            <person name="Branagan A.M."/>
            <person name="Klein J.A."/>
            <person name="Jordan C.S."/>
            <person name="Morrical S.W."/>
        </authorList>
    </citation>
    <scope>INTERACTION WITH THE DNA HELICASE ASSEMBLY PROTEIN</scope>
</reference>
<reference key="17">
    <citation type="journal article" date="2015" name="DNA Repair">
        <title>Regulation of the bacteriophage T4 Dda helicase by Gp32 single-stranded DNA-binding protein.</title>
        <authorList>
            <person name="Jordan C.S."/>
            <person name="Morrical S.W."/>
        </authorList>
    </citation>
    <scope>DOMAIN</scope>
    <scope>INTERACTION WITH THE DNA HELICASE</scope>
</reference>
<reference key="18">
    <citation type="journal article" date="2015" name="Nucleic Acids Res.">
        <title>Mapping the interactions of the single-stranded DNA binding protein of bacteriophage T4 (gp32) with DNA lattices at single nucleotide resolution: gp32 monomer binding.</title>
        <authorList>
            <person name="Jose D."/>
            <person name="Weitzel S.E."/>
            <person name="Baase W.A."/>
            <person name="von Hippel P.H."/>
        </authorList>
    </citation>
    <scope>SUBUNIT</scope>
</reference>
<reference key="19">
    <citation type="journal article" date="2015" name="Viruses">
        <title>Coordinated DNA replication by the bacteriophage T4 replisome.</title>
        <authorList>
            <person name="Noble E."/>
            <person name="Spiering M.M."/>
            <person name="Benkovic S.J."/>
        </authorList>
    </citation>
    <scope>REVIEW</scope>
</reference>
<reference key="20">
    <citation type="journal article" date="2018" name="PLoS ONE">
        <title>The role of the C-domain of bacteriophage T4 gene 32 protein in ssDNA binding and dsDNA helix-destabilization: Kinetic, single-molecule, and cross-linking studies.</title>
        <authorList>
            <person name="Pant K."/>
            <person name="Anderson B."/>
            <person name="Perdana H."/>
            <person name="Malinowski M.A."/>
            <person name="Win A.T."/>
            <person name="Pabst C."/>
            <person name="Williams M.C."/>
            <person name="Karpel R.L."/>
        </authorList>
    </citation>
    <scope>DOMAIN</scope>
</reference>
<reference key="21">
    <citation type="journal article" date="1995" name="Nature">
        <title>Crystal structure of a replication fork single-stranded DNA binding protein (T4 gp32) complexed to DNA.</title>
        <authorList>
            <person name="Shamoo Y."/>
            <person name="Friedman A.M."/>
            <person name="Parsons M.R."/>
            <person name="Konigsberg W.H."/>
            <person name="Steitz T.A."/>
        </authorList>
    </citation>
    <scope>X-RAY CRYSTALLOGRAPHY (2.2 ANGSTROMS) OF 22-239</scope>
</reference>
<reference key="22">
    <citation type="journal article" date="1995" name="Nature">
        <authorList>
            <person name="Shamoo Y."/>
            <person name="Friedman A.M."/>
            <person name="Parsons M.R."/>
            <person name="Konigsberg W.H."/>
            <person name="Steitz T.A."/>
        </authorList>
    </citation>
    <scope>ERRATUM OF PUBMED:7630406</scope>
</reference>
<gene>
    <name evidence="1" type="primary">32</name>
    <name type="synonym">ssb</name>
</gene>
<accession>P03695</accession>
<accession>Q38555</accession>
<feature type="chain" id="PRO_0000165047" description="Single-stranded DNA-binding protein">
    <location>
        <begin position="1"/>
        <end position="301"/>
    </location>
</feature>
<feature type="region of interest" description="LAST" evidence="1 9">
    <location>
        <begin position="3"/>
        <end position="7"/>
    </location>
</feature>
<feature type="region of interest" description="Disordered" evidence="2">
    <location>
        <begin position="272"/>
        <end position="301"/>
    </location>
</feature>
<feature type="compositionally biased region" description="Low complexity" evidence="2">
    <location>
        <begin position="279"/>
        <end position="289"/>
    </location>
</feature>
<feature type="compositionally biased region" description="Acidic residues" evidence="2">
    <location>
        <begin position="290"/>
        <end position="301"/>
    </location>
</feature>
<feature type="binding site" evidence="1 8">
    <location>
        <position position="64"/>
    </location>
    <ligand>
        <name>Zn(2+)</name>
        <dbReference type="ChEBI" id="CHEBI:29105"/>
    </ligand>
</feature>
<feature type="binding site" evidence="1 8">
    <location>
        <position position="77"/>
    </location>
    <ligand>
        <name>Zn(2+)</name>
        <dbReference type="ChEBI" id="CHEBI:29105"/>
    </ligand>
</feature>
<feature type="binding site" evidence="1 8">
    <location>
        <position position="87"/>
    </location>
    <ligand>
        <name>Zn(2+)</name>
        <dbReference type="ChEBI" id="CHEBI:29105"/>
    </ligand>
</feature>
<feature type="binding site" evidence="1 8">
    <location>
        <position position="90"/>
    </location>
    <ligand>
        <name>Zn(2+)</name>
        <dbReference type="ChEBI" id="CHEBI:29105"/>
    </ligand>
</feature>
<feature type="sequence variant" description="In mutant 32AMA453." evidence="15">
    <location>
        <begin position="116"/>
        <end position="301"/>
    </location>
</feature>
<feature type="sequence variant" description="In mutant delta PR201." evidence="16">
    <location>
        <begin position="292"/>
        <end position="296"/>
    </location>
</feature>
<feature type="sequence conflict" description="In Ref. 2; AA sequence." evidence="19" ref="2">
    <original>S</original>
    <variation>A</variation>
    <location>
        <position position="86"/>
    </location>
</feature>
<feature type="sequence conflict" description="In Ref. 2; AA sequence." evidence="19" ref="2">
    <original>Q</original>
    <variation>E</variation>
    <location>
        <position position="91"/>
    </location>
</feature>
<feature type="sequence conflict" description="In Ref. 2; AA sequence." evidence="19" ref="2">
    <original>D</original>
    <variation>N</variation>
    <location>
        <position position="124"/>
    </location>
</feature>
<feature type="sequence conflict" description="In Ref. 2; AA sequence." evidence="19" ref="2">
    <original>E</original>
    <variation>Q</variation>
    <location>
        <position position="156"/>
    </location>
</feature>
<feature type="sequence conflict" description="In Ref. 2; AA sequence." evidence="19" ref="2">
    <original>Q</original>
    <variation>E</variation>
    <location>
        <position position="194"/>
    </location>
</feature>
<feature type="sequence conflict" description="In Ref. 2; AA sequence." evidence="19" ref="2">
    <original>D</original>
    <variation>N</variation>
    <location>
        <position position="202"/>
    </location>
</feature>
<feature type="sequence conflict" description="In Ref. 2; AA sequence." evidence="19" ref="2">
    <original>Q</original>
    <variation>E</variation>
    <location>
        <position position="212"/>
    </location>
</feature>
<feature type="sequence conflict" description="In Ref. 2; AA sequence." evidence="19" ref="2">
    <original>D</original>
    <variation>N</variation>
    <location>
        <position position="223"/>
    </location>
</feature>
<feature type="sequence conflict" description="In Ref. 2; AA sequence." evidence="19" ref="2">
    <original>DD</original>
    <variation>NN</variation>
    <location>
        <begin position="276"/>
        <end position="277"/>
    </location>
</feature>
<feature type="helix" evidence="21">
    <location>
        <begin position="26"/>
        <end position="28"/>
    </location>
</feature>
<feature type="strand" evidence="21">
    <location>
        <begin position="41"/>
        <end position="47"/>
    </location>
</feature>
<feature type="strand" evidence="21">
    <location>
        <begin position="51"/>
        <end position="55"/>
    </location>
</feature>
<feature type="strand" evidence="21">
    <location>
        <begin position="57"/>
        <end position="68"/>
    </location>
</feature>
<feature type="strand" evidence="21">
    <location>
        <begin position="71"/>
        <end position="76"/>
    </location>
</feature>
<feature type="helix" evidence="21">
    <location>
        <begin position="78"/>
        <end position="81"/>
    </location>
</feature>
<feature type="helix" evidence="21">
    <location>
        <begin position="88"/>
        <end position="95"/>
    </location>
</feature>
<feature type="helix" evidence="21">
    <location>
        <begin position="98"/>
        <end position="101"/>
    </location>
</feature>
<feature type="helix" evidence="21">
    <location>
        <begin position="103"/>
        <end position="109"/>
    </location>
</feature>
<feature type="strand" evidence="21">
    <location>
        <begin position="112"/>
        <end position="123"/>
    </location>
</feature>
<feature type="helix" evidence="21">
    <location>
        <begin position="128"/>
        <end position="130"/>
    </location>
</feature>
<feature type="strand" evidence="21">
    <location>
        <begin position="134"/>
        <end position="139"/>
    </location>
</feature>
<feature type="helix" evidence="21">
    <location>
        <begin position="141"/>
        <end position="148"/>
    </location>
</feature>
<feature type="turn" evidence="21">
    <location>
        <begin position="149"/>
        <end position="151"/>
    </location>
</feature>
<feature type="helix" evidence="21">
    <location>
        <begin position="155"/>
        <end position="157"/>
    </location>
</feature>
<feature type="turn" evidence="21">
    <location>
        <begin position="167"/>
        <end position="169"/>
    </location>
</feature>
<feature type="strand" evidence="21">
    <location>
        <begin position="173"/>
        <end position="180"/>
    </location>
</feature>
<feature type="strand" evidence="21">
    <location>
        <begin position="183"/>
        <end position="185"/>
    </location>
</feature>
<feature type="turn" evidence="21">
    <location>
        <begin position="198"/>
        <end position="201"/>
    </location>
</feature>
<feature type="helix" evidence="21">
    <location>
        <begin position="203"/>
        <end position="212"/>
    </location>
</feature>
<feature type="helix" evidence="21">
    <location>
        <begin position="216"/>
        <end position="220"/>
    </location>
</feature>
<feature type="helix" evidence="21">
    <location>
        <begin position="228"/>
        <end position="238"/>
    </location>
</feature>
<evidence type="ECO:0000255" key="1">
    <source>
        <dbReference type="HAMAP-Rule" id="MF_04152"/>
    </source>
</evidence>
<evidence type="ECO:0000256" key="2">
    <source>
        <dbReference type="SAM" id="MobiDB-lite"/>
    </source>
</evidence>
<evidence type="ECO:0000269" key="3">
    <source>
    </source>
</evidence>
<evidence type="ECO:0000269" key="4">
    <source>
    </source>
</evidence>
<evidence type="ECO:0000269" key="5">
    <source>
    </source>
</evidence>
<evidence type="ECO:0000269" key="6">
    <source>
    </source>
</evidence>
<evidence type="ECO:0000269" key="7">
    <source>
    </source>
</evidence>
<evidence type="ECO:0000269" key="8">
    <source>
    </source>
</evidence>
<evidence type="ECO:0000269" key="9">
    <source>
    </source>
</evidence>
<evidence type="ECO:0000269" key="10">
    <source>
    </source>
</evidence>
<evidence type="ECO:0000269" key="11">
    <source>
    </source>
</evidence>
<evidence type="ECO:0000269" key="12">
    <source>
    </source>
</evidence>
<evidence type="ECO:0000269" key="13">
    <source>
    </source>
</evidence>
<evidence type="ECO:0000269" key="14">
    <source>
    </source>
</evidence>
<evidence type="ECO:0000269" key="15">
    <source>
    </source>
</evidence>
<evidence type="ECO:0000269" key="16">
    <source>
    </source>
</evidence>
<evidence type="ECO:0000269" key="17">
    <source>
    </source>
</evidence>
<evidence type="ECO:0000303" key="18">
    <source>
    </source>
</evidence>
<evidence type="ECO:0000305" key="19"/>
<evidence type="ECO:0000305" key="20">
    <source>
    </source>
</evidence>
<evidence type="ECO:0007829" key="21">
    <source>
        <dbReference type="PDB" id="1GPC"/>
    </source>
</evidence>
<organism>
    <name type="scientific">Enterobacteria phage T4</name>
    <name type="common">Bacteriophage T4</name>
    <dbReference type="NCBI Taxonomy" id="10665"/>
    <lineage>
        <taxon>Viruses</taxon>
        <taxon>Duplodnaviria</taxon>
        <taxon>Heunggongvirae</taxon>
        <taxon>Uroviricota</taxon>
        <taxon>Caudoviricetes</taxon>
        <taxon>Straboviridae</taxon>
        <taxon>Tevenvirinae</taxon>
        <taxon>Tequatrovirus</taxon>
    </lineage>
</organism>
<dbReference type="EMBL" id="J02513">
    <property type="protein sequence ID" value="AAA32511.1"/>
    <property type="molecule type" value="Genomic_DNA"/>
</dbReference>
<dbReference type="EMBL" id="AF158101">
    <property type="protein sequence ID" value="AAD42454.1"/>
    <property type="molecule type" value="Genomic_DNA"/>
</dbReference>
<dbReference type="EMBL" id="S54962">
    <property type="protein sequence ID" value="AAB25300.1"/>
    <property type="molecule type" value="Genomic_DNA"/>
</dbReference>
<dbReference type="PIR" id="A93924">
    <property type="entry name" value="DDBP34"/>
</dbReference>
<dbReference type="RefSeq" id="NP_049854.1">
    <property type="nucleotide sequence ID" value="NC_000866.4"/>
</dbReference>
<dbReference type="PDB" id="1GPC">
    <property type="method" value="X-ray"/>
    <property type="resolution" value="2.20 A"/>
    <property type="chains" value="A=22-239"/>
</dbReference>
<dbReference type="PDB" id="8GME">
    <property type="method" value="X-ray"/>
    <property type="resolution" value="4.98 A"/>
    <property type="chains" value="A/B=1-301"/>
</dbReference>
<dbReference type="PDB" id="8S9I">
    <property type="method" value="X-ray"/>
    <property type="resolution" value="3.53 A"/>
    <property type="chains" value="G=248-270"/>
</dbReference>
<dbReference type="PDBsum" id="1GPC"/>
<dbReference type="PDBsum" id="8GME"/>
<dbReference type="PDBsum" id="8S9I"/>
<dbReference type="SMR" id="P03695"/>
<dbReference type="GeneID" id="1258602"/>
<dbReference type="KEGG" id="vg:1258602"/>
<dbReference type="OrthoDB" id="3870at10239"/>
<dbReference type="EvolutionaryTrace" id="P03695"/>
<dbReference type="Proteomes" id="UP000009087">
    <property type="component" value="Segment"/>
</dbReference>
<dbReference type="GO" id="GO:0046872">
    <property type="term" value="F:metal ion binding"/>
    <property type="evidence" value="ECO:0007669"/>
    <property type="project" value="UniProtKB-UniRule"/>
</dbReference>
<dbReference type="GO" id="GO:0003697">
    <property type="term" value="F:single-stranded DNA binding"/>
    <property type="evidence" value="ECO:0007669"/>
    <property type="project" value="UniProtKB-UniRule"/>
</dbReference>
<dbReference type="GO" id="GO:0039686">
    <property type="term" value="P:bidirectional double-stranded viral DNA replication"/>
    <property type="evidence" value="ECO:0000314"/>
    <property type="project" value="UniProtKB"/>
</dbReference>
<dbReference type="GO" id="GO:0006310">
    <property type="term" value="P:DNA recombination"/>
    <property type="evidence" value="ECO:0007669"/>
    <property type="project" value="UniProtKB-UniRule"/>
</dbReference>
<dbReference type="GO" id="GO:0006281">
    <property type="term" value="P:DNA repair"/>
    <property type="evidence" value="ECO:0007669"/>
    <property type="project" value="UniProtKB-UniRule"/>
</dbReference>
<dbReference type="GO" id="GO:0006260">
    <property type="term" value="P:DNA replication"/>
    <property type="evidence" value="ECO:0007669"/>
    <property type="project" value="UniProtKB-KW"/>
</dbReference>
<dbReference type="FunFam" id="3.90.198.10:FF:000001">
    <property type="entry name" value="Single-stranded DNA binding protein"/>
    <property type="match status" value="1"/>
</dbReference>
<dbReference type="Gene3D" id="3.90.198.10">
    <property type="entry name" value="Replication Fork Single-Stranded Dna Binding Protein"/>
    <property type="match status" value="1"/>
</dbReference>
<dbReference type="HAMAP" id="MF_04152">
    <property type="entry name" value="SSB_T4"/>
    <property type="match status" value="1"/>
</dbReference>
<dbReference type="InterPro" id="IPR012340">
    <property type="entry name" value="NA-bd_OB-fold"/>
</dbReference>
<dbReference type="InterPro" id="IPR012339">
    <property type="entry name" value="Phage_T4_Gp32_ssDNA-bd"/>
</dbReference>
<dbReference type="InterPro" id="IPR044947">
    <property type="entry name" value="Phage_T4_Gp32_ssDNA-bd_sf"/>
</dbReference>
<dbReference type="InterPro" id="IPR046395">
    <property type="entry name" value="SSB_T4"/>
</dbReference>
<dbReference type="Pfam" id="PF08804">
    <property type="entry name" value="gp32"/>
    <property type="match status" value="1"/>
</dbReference>
<dbReference type="SUPFAM" id="SSF50249">
    <property type="entry name" value="Nucleic acid-binding proteins"/>
    <property type="match status" value="1"/>
</dbReference>